<reference key="1">
    <citation type="journal article" date="2004" name="Genome Res.">
        <title>The status, quality, and expansion of the NIH full-length cDNA project: the Mammalian Gene Collection (MGC).</title>
        <authorList>
            <consortium name="The MGC Project Team"/>
        </authorList>
    </citation>
    <scope>NUCLEOTIDE SEQUENCE [LARGE SCALE MRNA] (ISOFORMS 1 AND 2)</scope>
    <source>
        <strain>C57BL/6J</strain>
        <tissue>Brain</tissue>
        <tissue>Colon</tissue>
    </source>
</reference>
<reference key="2">
    <citation type="journal article" date="2005" name="Science">
        <title>The transcriptional landscape of the mammalian genome.</title>
        <authorList>
            <person name="Carninci P."/>
            <person name="Kasukawa T."/>
            <person name="Katayama S."/>
            <person name="Gough J."/>
            <person name="Frith M.C."/>
            <person name="Maeda N."/>
            <person name="Oyama R."/>
            <person name="Ravasi T."/>
            <person name="Lenhard B."/>
            <person name="Wells C."/>
            <person name="Kodzius R."/>
            <person name="Shimokawa K."/>
            <person name="Bajic V.B."/>
            <person name="Brenner S.E."/>
            <person name="Batalov S."/>
            <person name="Forrest A.R."/>
            <person name="Zavolan M."/>
            <person name="Davis M.J."/>
            <person name="Wilming L.G."/>
            <person name="Aidinis V."/>
            <person name="Allen J.E."/>
            <person name="Ambesi-Impiombato A."/>
            <person name="Apweiler R."/>
            <person name="Aturaliya R.N."/>
            <person name="Bailey T.L."/>
            <person name="Bansal M."/>
            <person name="Baxter L."/>
            <person name="Beisel K.W."/>
            <person name="Bersano T."/>
            <person name="Bono H."/>
            <person name="Chalk A.M."/>
            <person name="Chiu K.P."/>
            <person name="Choudhary V."/>
            <person name="Christoffels A."/>
            <person name="Clutterbuck D.R."/>
            <person name="Crowe M.L."/>
            <person name="Dalla E."/>
            <person name="Dalrymple B.P."/>
            <person name="de Bono B."/>
            <person name="Della Gatta G."/>
            <person name="di Bernardo D."/>
            <person name="Down T."/>
            <person name="Engstrom P."/>
            <person name="Fagiolini M."/>
            <person name="Faulkner G."/>
            <person name="Fletcher C.F."/>
            <person name="Fukushima T."/>
            <person name="Furuno M."/>
            <person name="Futaki S."/>
            <person name="Gariboldi M."/>
            <person name="Georgii-Hemming P."/>
            <person name="Gingeras T.R."/>
            <person name="Gojobori T."/>
            <person name="Green R.E."/>
            <person name="Gustincich S."/>
            <person name="Harbers M."/>
            <person name="Hayashi Y."/>
            <person name="Hensch T.K."/>
            <person name="Hirokawa N."/>
            <person name="Hill D."/>
            <person name="Huminiecki L."/>
            <person name="Iacono M."/>
            <person name="Ikeo K."/>
            <person name="Iwama A."/>
            <person name="Ishikawa T."/>
            <person name="Jakt M."/>
            <person name="Kanapin A."/>
            <person name="Katoh M."/>
            <person name="Kawasawa Y."/>
            <person name="Kelso J."/>
            <person name="Kitamura H."/>
            <person name="Kitano H."/>
            <person name="Kollias G."/>
            <person name="Krishnan S.P."/>
            <person name="Kruger A."/>
            <person name="Kummerfeld S.K."/>
            <person name="Kurochkin I.V."/>
            <person name="Lareau L.F."/>
            <person name="Lazarevic D."/>
            <person name="Lipovich L."/>
            <person name="Liu J."/>
            <person name="Liuni S."/>
            <person name="McWilliam S."/>
            <person name="Madan Babu M."/>
            <person name="Madera M."/>
            <person name="Marchionni L."/>
            <person name="Matsuda H."/>
            <person name="Matsuzawa S."/>
            <person name="Miki H."/>
            <person name="Mignone F."/>
            <person name="Miyake S."/>
            <person name="Morris K."/>
            <person name="Mottagui-Tabar S."/>
            <person name="Mulder N."/>
            <person name="Nakano N."/>
            <person name="Nakauchi H."/>
            <person name="Ng P."/>
            <person name="Nilsson R."/>
            <person name="Nishiguchi S."/>
            <person name="Nishikawa S."/>
            <person name="Nori F."/>
            <person name="Ohara O."/>
            <person name="Okazaki Y."/>
            <person name="Orlando V."/>
            <person name="Pang K.C."/>
            <person name="Pavan W.J."/>
            <person name="Pavesi G."/>
            <person name="Pesole G."/>
            <person name="Petrovsky N."/>
            <person name="Piazza S."/>
            <person name="Reed J."/>
            <person name="Reid J.F."/>
            <person name="Ring B.Z."/>
            <person name="Ringwald M."/>
            <person name="Rost B."/>
            <person name="Ruan Y."/>
            <person name="Salzberg S.L."/>
            <person name="Sandelin A."/>
            <person name="Schneider C."/>
            <person name="Schoenbach C."/>
            <person name="Sekiguchi K."/>
            <person name="Semple C.A."/>
            <person name="Seno S."/>
            <person name="Sessa L."/>
            <person name="Sheng Y."/>
            <person name="Shibata Y."/>
            <person name="Shimada H."/>
            <person name="Shimada K."/>
            <person name="Silva D."/>
            <person name="Sinclair B."/>
            <person name="Sperling S."/>
            <person name="Stupka E."/>
            <person name="Sugiura K."/>
            <person name="Sultana R."/>
            <person name="Takenaka Y."/>
            <person name="Taki K."/>
            <person name="Tammoja K."/>
            <person name="Tan S.L."/>
            <person name="Tang S."/>
            <person name="Taylor M.S."/>
            <person name="Tegner J."/>
            <person name="Teichmann S.A."/>
            <person name="Ueda H.R."/>
            <person name="van Nimwegen E."/>
            <person name="Verardo R."/>
            <person name="Wei C.L."/>
            <person name="Yagi K."/>
            <person name="Yamanishi H."/>
            <person name="Zabarovsky E."/>
            <person name="Zhu S."/>
            <person name="Zimmer A."/>
            <person name="Hide W."/>
            <person name="Bult C."/>
            <person name="Grimmond S.M."/>
            <person name="Teasdale R.D."/>
            <person name="Liu E.T."/>
            <person name="Brusic V."/>
            <person name="Quackenbush J."/>
            <person name="Wahlestedt C."/>
            <person name="Mattick J.S."/>
            <person name="Hume D.A."/>
            <person name="Kai C."/>
            <person name="Sasaki D."/>
            <person name="Tomaru Y."/>
            <person name="Fukuda S."/>
            <person name="Kanamori-Katayama M."/>
            <person name="Suzuki M."/>
            <person name="Aoki J."/>
            <person name="Arakawa T."/>
            <person name="Iida J."/>
            <person name="Imamura K."/>
            <person name="Itoh M."/>
            <person name="Kato T."/>
            <person name="Kawaji H."/>
            <person name="Kawagashira N."/>
            <person name="Kawashima T."/>
            <person name="Kojima M."/>
            <person name="Kondo S."/>
            <person name="Konno H."/>
            <person name="Nakano K."/>
            <person name="Ninomiya N."/>
            <person name="Nishio T."/>
            <person name="Okada M."/>
            <person name="Plessy C."/>
            <person name="Shibata K."/>
            <person name="Shiraki T."/>
            <person name="Suzuki S."/>
            <person name="Tagami M."/>
            <person name="Waki K."/>
            <person name="Watahiki A."/>
            <person name="Okamura-Oho Y."/>
            <person name="Suzuki H."/>
            <person name="Kawai J."/>
            <person name="Hayashizaki Y."/>
        </authorList>
    </citation>
    <scope>NUCLEOTIDE SEQUENCE [LARGE SCALE MRNA] OF 633-1159</scope>
    <source>
        <strain>NOD</strain>
        <tissue>Thymus</tissue>
    </source>
</reference>
<reference key="3">
    <citation type="journal article" date="2003" name="DNA Res.">
        <title>Prediction of the coding sequences of mouse homologues of KIAA gene: III. The complete nucleotide sequences of 500 mouse KIAA-homologous cDNAs identified by screening of terminal sequences of cDNA clones randomly sampled from size-fractionated libraries.</title>
        <authorList>
            <person name="Okazaki N."/>
            <person name="Kikuno R."/>
            <person name="Ohara R."/>
            <person name="Inamoto S."/>
            <person name="Koseki H."/>
            <person name="Hiraoka S."/>
            <person name="Saga Y."/>
            <person name="Nagase T."/>
            <person name="Ohara O."/>
            <person name="Koga H."/>
        </authorList>
    </citation>
    <scope>NUCLEOTIDE SEQUENCE [LARGE SCALE MRNA] OF 681-1159</scope>
    <source>
        <tissue>Brain</tissue>
    </source>
</reference>
<reference key="4">
    <citation type="submission" date="2003-12" db="EMBL/GenBank/DDBJ databases">
        <authorList>
            <person name="Okazaki N."/>
            <person name="Kikuno R."/>
            <person name="Nagase T."/>
            <person name="Ohara O."/>
            <person name="Koga H."/>
        </authorList>
    </citation>
    <scope>SEQUENCE REVISION</scope>
</reference>
<reference key="5">
    <citation type="journal article" date="2010" name="Cell">
        <title>A tissue-specific atlas of mouse protein phosphorylation and expression.</title>
        <authorList>
            <person name="Huttlin E.L."/>
            <person name="Jedrychowski M.P."/>
            <person name="Elias J.E."/>
            <person name="Goswami T."/>
            <person name="Rad R."/>
            <person name="Beausoleil S.A."/>
            <person name="Villen J."/>
            <person name="Haas W."/>
            <person name="Sowa M.E."/>
            <person name="Gygi S.P."/>
        </authorList>
    </citation>
    <scope>IDENTIFICATION BY MASS SPECTROMETRY [LARGE SCALE ANALYSIS]</scope>
    <source>
        <tissue>Brain</tissue>
        <tissue>Brown adipose tissue</tissue>
        <tissue>Heart</tissue>
        <tissue>Kidney</tissue>
        <tissue>Liver</tissue>
        <tissue>Lung</tissue>
        <tissue>Pancreas</tissue>
        <tissue>Spleen</tissue>
        <tissue>Testis</tissue>
    </source>
</reference>
<reference key="6">
    <citation type="journal article" date="2014" name="Sci. Rep.">
        <title>WASH complex regulates Arp2/3 complex for actin-based polar body extrusion in mouse oocytes.</title>
        <authorList>
            <person name="Wang F."/>
            <person name="Zhang L."/>
            <person name="Zhang G.L."/>
            <person name="Wang Z.B."/>
            <person name="Cui X.S."/>
            <person name="Kim N.H."/>
            <person name="Sun S.C."/>
        </authorList>
    </citation>
    <scope>FUNCTION</scope>
</reference>
<feature type="chain" id="PRO_0000050734" description="WASH complex subunit 5">
    <location>
        <begin position="1"/>
        <end position="1159"/>
    </location>
</feature>
<feature type="splice variant" id="VSP_010323" description="In isoform 2." evidence="3">
    <location>
        <begin position="1"/>
        <end position="450"/>
    </location>
</feature>
<feature type="splice variant" id="VSP_010324" description="In isoform 2." evidence="3">
    <original>TELADVFSGVKPLTRVEKN</original>
    <variation>MAEPVWRCGCKASGQEEEL</variation>
    <location>
        <begin position="451"/>
        <end position="469"/>
    </location>
</feature>
<feature type="sequence conflict" description="In Ref. 2; BAC40548." evidence="4" ref="2">
    <original>I</original>
    <variation>T</variation>
    <location>
        <position position="682"/>
    </location>
</feature>
<keyword id="KW-0025">Alternative splicing</keyword>
<keyword id="KW-0963">Cytoplasm</keyword>
<keyword id="KW-0256">Endoplasmic reticulum</keyword>
<keyword id="KW-0967">Endosome</keyword>
<keyword id="KW-0653">Protein transport</keyword>
<keyword id="KW-1185">Reference proteome</keyword>
<keyword id="KW-0813">Transport</keyword>
<organism>
    <name type="scientific">Mus musculus</name>
    <name type="common">Mouse</name>
    <dbReference type="NCBI Taxonomy" id="10090"/>
    <lineage>
        <taxon>Eukaryota</taxon>
        <taxon>Metazoa</taxon>
        <taxon>Chordata</taxon>
        <taxon>Craniata</taxon>
        <taxon>Vertebrata</taxon>
        <taxon>Euteleostomi</taxon>
        <taxon>Mammalia</taxon>
        <taxon>Eutheria</taxon>
        <taxon>Euarchontoglires</taxon>
        <taxon>Glires</taxon>
        <taxon>Rodentia</taxon>
        <taxon>Myomorpha</taxon>
        <taxon>Muroidea</taxon>
        <taxon>Muridae</taxon>
        <taxon>Murinae</taxon>
        <taxon>Mus</taxon>
        <taxon>Mus</taxon>
    </lineage>
</organism>
<accession>Q8C2E7</accession>
<accession>Q8BGY1</accession>
<accession>Q8K2J2</accession>
<dbReference type="EMBL" id="BC031364">
    <property type="protein sequence ID" value="AAH31364.1"/>
    <property type="molecule type" value="mRNA"/>
</dbReference>
<dbReference type="EMBL" id="BC034070">
    <property type="protein sequence ID" value="AAH34070.1"/>
    <property type="molecule type" value="mRNA"/>
</dbReference>
<dbReference type="EMBL" id="BC040815">
    <property type="protein sequence ID" value="AAH40815.1"/>
    <property type="molecule type" value="mRNA"/>
</dbReference>
<dbReference type="EMBL" id="BC067035">
    <property type="protein sequence ID" value="AAH67035.1"/>
    <property type="molecule type" value="mRNA"/>
</dbReference>
<dbReference type="EMBL" id="AK088754">
    <property type="protein sequence ID" value="BAC40548.1"/>
    <property type="molecule type" value="mRNA"/>
</dbReference>
<dbReference type="EMBL" id="AK129086">
    <property type="protein sequence ID" value="BAC97896.2"/>
    <property type="molecule type" value="Transcribed_RNA"/>
</dbReference>
<dbReference type="CCDS" id="CCDS37083.1">
    <molecule id="Q8C2E7-1"/>
</dbReference>
<dbReference type="RefSeq" id="NP_705776.2">
    <molecule id="Q8C2E7-1"/>
    <property type="nucleotide sequence ID" value="NM_153548.2"/>
</dbReference>
<dbReference type="SMR" id="Q8C2E7"/>
<dbReference type="BioGRID" id="230156">
    <property type="interactions" value="8"/>
</dbReference>
<dbReference type="ComplexPortal" id="CPX-1177">
    <property type="entry name" value="WASH complex, variant WASHC1/WASHC2"/>
</dbReference>
<dbReference type="FunCoup" id="Q8C2E7">
    <property type="interactions" value="3748"/>
</dbReference>
<dbReference type="IntAct" id="Q8C2E7">
    <property type="interactions" value="1"/>
</dbReference>
<dbReference type="MINT" id="Q8C2E7"/>
<dbReference type="STRING" id="10090.ENSMUSP00000022976"/>
<dbReference type="GlyGen" id="Q8C2E7">
    <property type="glycosylation" value="2 sites, 2 N-linked glycans (2 sites)"/>
</dbReference>
<dbReference type="iPTMnet" id="Q8C2E7"/>
<dbReference type="PhosphoSitePlus" id="Q8C2E7"/>
<dbReference type="SwissPalm" id="Q8C2E7"/>
<dbReference type="jPOST" id="Q8C2E7"/>
<dbReference type="PaxDb" id="10090-ENSMUSP00000022976"/>
<dbReference type="PeptideAtlas" id="Q8C2E7"/>
<dbReference type="ProteomicsDB" id="299742">
    <molecule id="Q8C2E7-1"/>
</dbReference>
<dbReference type="ProteomicsDB" id="299743">
    <molecule id="Q8C2E7-2"/>
</dbReference>
<dbReference type="Pumba" id="Q8C2E7"/>
<dbReference type="Antibodypedia" id="56103">
    <property type="antibodies" value="54 antibodies from 17 providers"/>
</dbReference>
<dbReference type="Ensembl" id="ENSMUST00000022976.6">
    <molecule id="Q8C2E7-1"/>
    <property type="protein sequence ID" value="ENSMUSP00000022976.5"/>
    <property type="gene ID" value="ENSMUSG00000022350.8"/>
</dbReference>
<dbReference type="Ensembl" id="ENSMUST00000227725.2">
    <molecule id="Q8C2E7-2"/>
    <property type="protein sequence ID" value="ENSMUSP00000154441.2"/>
    <property type="gene ID" value="ENSMUSG00000022350.8"/>
</dbReference>
<dbReference type="GeneID" id="223593"/>
<dbReference type="KEGG" id="mmu:223593"/>
<dbReference type="UCSC" id="uc007vxs.1">
    <molecule id="Q8C2E7-2"/>
    <property type="organism name" value="mouse"/>
</dbReference>
<dbReference type="UCSC" id="uc007vxt.1">
    <molecule id="Q8C2E7-1"/>
    <property type="organism name" value="mouse"/>
</dbReference>
<dbReference type="AGR" id="MGI:2146110"/>
<dbReference type="CTD" id="9897"/>
<dbReference type="MGI" id="MGI:2146110">
    <property type="gene designation" value="Washc5"/>
</dbReference>
<dbReference type="VEuPathDB" id="HostDB:ENSMUSG00000022350"/>
<dbReference type="eggNOG" id="KOG3666">
    <property type="taxonomic scope" value="Eukaryota"/>
</dbReference>
<dbReference type="GeneTree" id="ENSGT00390000011137"/>
<dbReference type="HOGENOM" id="CLU_004021_1_0_1"/>
<dbReference type="InParanoid" id="Q8C2E7"/>
<dbReference type="OMA" id="FFPDNWV"/>
<dbReference type="OrthoDB" id="565118at2759"/>
<dbReference type="PhylomeDB" id="Q8C2E7"/>
<dbReference type="TreeFam" id="TF314480"/>
<dbReference type="BioGRID-ORCS" id="223593">
    <property type="hits" value="13 hits in 76 CRISPR screens"/>
</dbReference>
<dbReference type="ChiTaRS" id="E430025E21Rik">
    <property type="organism name" value="mouse"/>
</dbReference>
<dbReference type="PRO" id="PR:Q8C2E7"/>
<dbReference type="Proteomes" id="UP000000589">
    <property type="component" value="Chromosome 15"/>
</dbReference>
<dbReference type="RNAct" id="Q8C2E7">
    <property type="molecule type" value="protein"/>
</dbReference>
<dbReference type="Bgee" id="ENSMUSG00000022350">
    <property type="expression patterns" value="Expressed in endothelial cell of lymphatic vessel and 250 other cell types or tissues"/>
</dbReference>
<dbReference type="GO" id="GO:0005737">
    <property type="term" value="C:cytoplasm"/>
    <property type="evidence" value="ECO:0000266"/>
    <property type="project" value="MGI"/>
</dbReference>
<dbReference type="GO" id="GO:0005829">
    <property type="term" value="C:cytosol"/>
    <property type="evidence" value="ECO:0007669"/>
    <property type="project" value="UniProtKB-SubCell"/>
</dbReference>
<dbReference type="GO" id="GO:0031901">
    <property type="term" value="C:early endosome membrane"/>
    <property type="evidence" value="ECO:0000303"/>
    <property type="project" value="ComplexPortal"/>
</dbReference>
<dbReference type="GO" id="GO:0005783">
    <property type="term" value="C:endoplasmic reticulum"/>
    <property type="evidence" value="ECO:0007669"/>
    <property type="project" value="UniProtKB-SubCell"/>
</dbReference>
<dbReference type="GO" id="GO:0005768">
    <property type="term" value="C:endosome"/>
    <property type="evidence" value="ECO:0000314"/>
    <property type="project" value="MGI"/>
</dbReference>
<dbReference type="GO" id="GO:0043025">
    <property type="term" value="C:neuronal cell body"/>
    <property type="evidence" value="ECO:0007669"/>
    <property type="project" value="Ensembl"/>
</dbReference>
<dbReference type="GO" id="GO:0071203">
    <property type="term" value="C:WASH complex"/>
    <property type="evidence" value="ECO:0000314"/>
    <property type="project" value="MGI"/>
</dbReference>
<dbReference type="GO" id="GO:0042802">
    <property type="term" value="F:identical protein binding"/>
    <property type="evidence" value="ECO:0000266"/>
    <property type="project" value="MGI"/>
</dbReference>
<dbReference type="GO" id="GO:0042632">
    <property type="term" value="P:cholesterol homeostasis"/>
    <property type="evidence" value="ECO:0000266"/>
    <property type="project" value="MGI"/>
</dbReference>
<dbReference type="GO" id="GO:0016197">
    <property type="term" value="P:endosomal transport"/>
    <property type="evidence" value="ECO:0000266"/>
    <property type="project" value="MGI"/>
</dbReference>
<dbReference type="GO" id="GO:0140285">
    <property type="term" value="P:endosome fission"/>
    <property type="evidence" value="ECO:0000266"/>
    <property type="project" value="MGI"/>
</dbReference>
<dbReference type="GO" id="GO:0006887">
    <property type="term" value="P:exocytosis"/>
    <property type="evidence" value="ECO:0000266"/>
    <property type="project" value="MGI"/>
</dbReference>
<dbReference type="GO" id="GO:0007040">
    <property type="term" value="P:lysosome organization"/>
    <property type="evidence" value="ECO:0000315"/>
    <property type="project" value="MGI"/>
</dbReference>
<dbReference type="GO" id="GO:0090306">
    <property type="term" value="P:meiotic spindle assembly"/>
    <property type="evidence" value="ECO:0000315"/>
    <property type="project" value="UniProtKB"/>
</dbReference>
<dbReference type="GO" id="GO:0001556">
    <property type="term" value="P:oocyte maturation"/>
    <property type="evidence" value="ECO:0000315"/>
    <property type="project" value="UniProtKB"/>
</dbReference>
<dbReference type="GO" id="GO:0006909">
    <property type="term" value="P:phagocytosis"/>
    <property type="evidence" value="ECO:0000266"/>
    <property type="project" value="MGI"/>
</dbReference>
<dbReference type="GO" id="GO:0040038">
    <property type="term" value="P:polar body extrusion after meiotic divisions"/>
    <property type="evidence" value="ECO:0000315"/>
    <property type="project" value="UniProtKB"/>
</dbReference>
<dbReference type="GO" id="GO:0010976">
    <property type="term" value="P:positive regulation of neuron projection development"/>
    <property type="evidence" value="ECO:0007669"/>
    <property type="project" value="Ensembl"/>
</dbReference>
<dbReference type="GO" id="GO:0015031">
    <property type="term" value="P:protein transport"/>
    <property type="evidence" value="ECO:0007669"/>
    <property type="project" value="UniProtKB-KW"/>
</dbReference>
<dbReference type="GO" id="GO:0031503">
    <property type="term" value="P:protein-containing complex localization"/>
    <property type="evidence" value="ECO:0000315"/>
    <property type="project" value="MGI"/>
</dbReference>
<dbReference type="GO" id="GO:0043933">
    <property type="term" value="P:protein-containing complex organization"/>
    <property type="evidence" value="ECO:0000315"/>
    <property type="project" value="MGI"/>
</dbReference>
<dbReference type="GO" id="GO:0051125">
    <property type="term" value="P:regulation of actin nucleation"/>
    <property type="evidence" value="ECO:0000315"/>
    <property type="project" value="MGI"/>
</dbReference>
<dbReference type="GO" id="GO:0034315">
    <property type="term" value="P:regulation of Arp2/3 complex-mediated actin nucleation"/>
    <property type="evidence" value="ECO:0000303"/>
    <property type="project" value="ComplexPortal"/>
</dbReference>
<dbReference type="GO" id="GO:0097494">
    <property type="term" value="P:regulation of vesicle size"/>
    <property type="evidence" value="ECO:0000315"/>
    <property type="project" value="MGI"/>
</dbReference>
<dbReference type="InterPro" id="IPR019393">
    <property type="entry name" value="WASH_strumpellin"/>
</dbReference>
<dbReference type="PANTHER" id="PTHR15691">
    <property type="entry name" value="WASH COMPLEX SUBUNIT 5"/>
    <property type="match status" value="1"/>
</dbReference>
<dbReference type="PANTHER" id="PTHR15691:SF6">
    <property type="entry name" value="WASH COMPLEX SUBUNIT 5"/>
    <property type="match status" value="1"/>
</dbReference>
<dbReference type="Pfam" id="PF10266">
    <property type="entry name" value="Strumpellin"/>
    <property type="match status" value="1"/>
</dbReference>
<comment type="function">
    <text evidence="1 2">Acts as a component of the WASH core complex that functions as a nucleation-promoting factor (NPF) at the surface of endosomes, where it recruits and activates the Arp2/3 complex to induce actin polymerization, playing a key role in the fission of tubules that serve as transport intermediates during endosome sorting. May be involved in axonal outgrowth. Involved in cellular localization of ADRB2. Involved in cellular trafficking of BLOC-1 complex cargos such as ATP7A and VAMP7 (By similarity). Involved in cytokinesis and following polar body extrusion during oocyte meiotic maturation (PubMed:24998208).</text>
</comment>
<comment type="subunit">
    <text evidence="1">Component of the WASH core complex also described as WASH regulatory complex (SHRC) composed of WASH (WASHC1, WASH2P or WASH3P), WASHC2 (WASHC2A or WASHC2C), WASHC3, WASHC4 and WASHC5. The WASH core complex associates via WASHC2 with the F-actin-capping protein dimer (formed by CAPZA1, CAPZA2 or CAPZA3 and CAPZB) in a transient or substoichiometric manner which was initially described as WASH complex. Interacts with VCP, PI4K2A (By similarity).</text>
</comment>
<comment type="subcellular location">
    <subcellularLocation>
        <location evidence="1">Cytoplasm</location>
        <location evidence="1">Cytosol</location>
    </subcellularLocation>
    <subcellularLocation>
        <location evidence="1">Endoplasmic reticulum</location>
    </subcellularLocation>
    <subcellularLocation>
        <location evidence="1">Early endosome</location>
    </subcellularLocation>
    <text evidence="1">Colocalizes with SYP/synaptophysin in the external molecular layer of the dentate gyrus and in motoneurons of the ventral horn of spinal cord.</text>
</comment>
<comment type="alternative products">
    <event type="alternative splicing"/>
    <isoform>
        <id>Q8C2E7-1</id>
        <name>1</name>
        <sequence type="displayed"/>
    </isoform>
    <isoform>
        <id>Q8C2E7-2</id>
        <name>2</name>
        <sequence type="described" ref="VSP_010323 VSP_010324"/>
    </isoform>
</comment>
<comment type="similarity">
    <text evidence="4">Belongs to the strumpellin family.</text>
</comment>
<protein>
    <recommendedName>
        <fullName evidence="5">WASH complex subunit 5</fullName>
    </recommendedName>
    <alternativeName>
        <fullName evidence="4">WASH complex subunit strumpellin</fullName>
    </alternativeName>
</protein>
<gene>
    <name evidence="5" type="primary">Washc5</name>
    <name type="synonym">Kiaa0196</name>
</gene>
<name>WASC5_MOUSE</name>
<evidence type="ECO:0000250" key="1">
    <source>
        <dbReference type="UniProtKB" id="Q12768"/>
    </source>
</evidence>
<evidence type="ECO:0000269" key="2">
    <source>
    </source>
</evidence>
<evidence type="ECO:0000303" key="3">
    <source>
    </source>
</evidence>
<evidence type="ECO:0000305" key="4"/>
<evidence type="ECO:0000312" key="5">
    <source>
        <dbReference type="MGI" id="MGI:2146110"/>
    </source>
</evidence>
<sequence length="1159" mass="134110">MLDFLAENNLCGQAILRIVSCGNAIIAEVLRLSEFIPAVFLLKDRADQQRYGDIIFDFSYFKGPEFWESKLEAKPELQDLDEEFRENNIEIVTRFYLAFQSVHKYIVDLNRYLDDLNEGVYIQQTLETVLLSEDGKQLLCEALYLYGVMLLVIDQKIEGEVRERMLVSYYRYSAARSSADSNMDDICKLLRSTGYSSQPGAKRPPNYPESYFQRVPINETFISMVIGRLRSDDIYNQVSAYPLPEHRSTALANQAAMLYVILYFEPSILHTHQAKMREIVDKYFPDNWVISIYMGITVNLADAWEPYKAAKTALNNTLDLANVKEQASRYASVSDRVRAQVQQFLKEGYLREEVLLDNIPRLLNCLRDCNVAIRWLMLHTADSACDPNNKRLRQIKDQILADSRYNPKILFQLLLDTAQFEFILKEMFKQMLSEKQSKWEHYKKEGSERMTELADVFSGVKPLTRVEKNENLQAWFREISKQILSLNYDDSTAAGRKTVQLIQALEEVQEFHQLESNLQVCQFLADTRKFLHQMIRTINIKEEVLITVQIIGDLSFAWQLIDSFTSIMQESIRVNPSMVTKLRATFLKLASALDLPLLRINQANSPDLLSVSQYYSGELVSYVRKVLQIIPESMFTSLLKIIKLQTHDIMEVPTRLDKDKLRDYAQLGPRYEVAKLTHAISIFTEGILMMKTTLVGIIKVDPKQLLEDGIRKELVKRVAFALHRGLIFNPRAKPSELMPKLKELGATMDGFHRSFEYIQDYVSIYGLKIWQEEVSRIINYNVEQECNNFLRTKIQDWQSMYQSTHIPIPKFAPVDESITFIGRLCREILRITDPKMTCYIDQLNTWYDVKTHQEVTSSRLFSEIQTTLGTFGLNGLDRLLCFMIVKELQNFLSMFQKIILKERTVQETLKMLMSAVNPLKSIVANSSKVYLSAITKTQKIWSAYLEAIMKVGQMQILRQQIANELNSSCRFDSRHLAAALDNLNKALLADIEAHYRDPSLPYPKEDNTLLYEITAYLEAAGIHNPLNKIYITTKRLPYFPIVNFLFLIAQLPKLQYNKNLGMVCRKPADPVDWPPLVLGLLTLLKQFHSRYTEQFLALIGQFIRSTMEQCTSQKMPEMPADAVGALLFLEDYVRYTKLPRRVAEAHVPNFIFDEFRTVL</sequence>
<proteinExistence type="evidence at protein level"/>